<gene>
    <name evidence="7" type="primary">vhoG</name>
    <name evidence="13" type="ordered locus">MM_2314</name>
</gene>
<organism>
    <name type="scientific">Methanosarcina mazei (strain ATCC BAA-159 / DSM 3647 / Goe1 / Go1 / JCM 11833 / OCM 88)</name>
    <name type="common">Methanosarcina frisia</name>
    <dbReference type="NCBI Taxonomy" id="192952"/>
    <lineage>
        <taxon>Archaea</taxon>
        <taxon>Methanobacteriati</taxon>
        <taxon>Methanobacteriota</taxon>
        <taxon>Stenosarchaea group</taxon>
        <taxon>Methanomicrobia</taxon>
        <taxon>Methanosarcinales</taxon>
        <taxon>Methanosarcinaceae</taxon>
        <taxon>Methanosarcina</taxon>
    </lineage>
</organism>
<keyword id="KW-0003">3Fe-4S</keyword>
<keyword id="KW-0004">4Fe-4S</keyword>
<keyword id="KW-1003">Cell membrane</keyword>
<keyword id="KW-0408">Iron</keyword>
<keyword id="KW-0411">Iron-sulfur</keyword>
<keyword id="KW-0472">Membrane</keyword>
<keyword id="KW-0479">Metal-binding</keyword>
<keyword id="KW-0484">Methanogenesis</keyword>
<keyword id="KW-0560">Oxidoreductase</keyword>
<keyword id="KW-0732">Signal</keyword>
<reference key="1">
    <citation type="journal article" date="1995" name="Eur. J. Biochem.">
        <title>Analysis of the vhoGAC and vhtGAC operons from Methanosarcina mazei strain Go1, both encoding a membrane-bound hydrogenase and a cytochrome b.</title>
        <authorList>
            <person name="Deppenmeier U."/>
            <person name="Blaut M."/>
            <person name="Lentes S."/>
            <person name="Herzberg C."/>
            <person name="Gottschalk G."/>
        </authorList>
    </citation>
    <scope>NUCLEOTIDE SEQUENCE [GENOMIC DNA]</scope>
    <scope>INDUCTION</scope>
    <source>
        <strain>ATCC BAA-159 / DSM 3647 / Goe1 / Go1 / JCM 11833 / OCM 88</strain>
    </source>
</reference>
<reference key="2">
    <citation type="journal article" date="2002" name="J. Mol. Microbiol. Biotechnol.">
        <title>The genome of Methanosarcina mazei: evidence for lateral gene transfer between Bacteria and Archaea.</title>
        <authorList>
            <person name="Deppenmeier U."/>
            <person name="Johann A."/>
            <person name="Hartsch T."/>
            <person name="Merkl R."/>
            <person name="Schmitz R.A."/>
            <person name="Martinez-Arias R."/>
            <person name="Henne A."/>
            <person name="Wiezer A."/>
            <person name="Baeumer S."/>
            <person name="Jacobi C."/>
            <person name="Brueggemann H."/>
            <person name="Lienard T."/>
            <person name="Christmann A."/>
            <person name="Boemecke M."/>
            <person name="Steckel S."/>
            <person name="Bhattacharyya A."/>
            <person name="Lykidis A."/>
            <person name="Overbeek R."/>
            <person name="Klenk H.-P."/>
            <person name="Gunsalus R.P."/>
            <person name="Fritz H.-J."/>
            <person name="Gottschalk G."/>
        </authorList>
    </citation>
    <scope>NUCLEOTIDE SEQUENCE [LARGE SCALE GENOMIC DNA]</scope>
    <source>
        <strain>ATCC BAA-159 / DSM 3647 / Goe1 / Go1 / JCM 11833 / OCM 88</strain>
    </source>
</reference>
<reference key="3">
    <citation type="journal article" date="1998" name="J. Bacteriol.">
        <title>Isolation and characterization of methanophenazine and function of phenazines in membrane-bound electron transport of Methanosarcina mazei Goe1.</title>
        <authorList>
            <person name="Abken H.J."/>
            <person name="Tietze M."/>
            <person name="Brodersen J."/>
            <person name="Baeumer S."/>
            <person name="Beifuss U."/>
            <person name="Deppenmeier U."/>
        </authorList>
    </citation>
    <scope>FUNCTION</scope>
    <source>
        <strain>ATCC BAA-159 / DSM 3647 / Goe1 / Go1 / JCM 11833 / OCM 88</strain>
    </source>
</reference>
<reference key="4">
    <citation type="journal article" date="1999" name="FEBS Lett.">
        <title>Novel reactions involved in energy conservation by methanogenic archaea.</title>
        <authorList>
            <person name="Deppenmeier U."/>
            <person name="Lienard T."/>
            <person name="Gottschalk G."/>
        </authorList>
    </citation>
    <scope>FUNCTION</scope>
    <scope>REVIEW</scope>
    <source>
        <strain>ATCC BAA-159 / DSM 3647 / Goe1 / Go1 / JCM 11833 / OCM 88</strain>
    </source>
</reference>
<reference key="5">
    <citation type="journal article" date="2014" name="Biochim. Biophys. Acta">
        <title>Bioenergetics and anaerobic respiratory chains of aceticlastic methanogens.</title>
        <authorList>
            <person name="Welte C."/>
            <person name="Deppenmeier U."/>
        </authorList>
    </citation>
    <scope>FUNCTION</scope>
    <scope>REVIEW</scope>
</reference>
<comment type="function">
    <text evidence="3 4 6">Part of the F420 non-reducing hydrogenase I complex that catalyzes the reduction of methanophenazine to dihydromethanophenazine.</text>
</comment>
<comment type="catalytic activity">
    <reaction evidence="9 10 12">
        <text>methanophenazine + H2 = dihydromethanophenazine</text>
        <dbReference type="Rhea" id="RHEA:24436"/>
        <dbReference type="ChEBI" id="CHEBI:18276"/>
        <dbReference type="ChEBI" id="CHEBI:29118"/>
        <dbReference type="ChEBI" id="CHEBI:50375"/>
        <dbReference type="EC" id="1.12.98.3"/>
    </reaction>
</comment>
<comment type="cofactor">
    <cofactor evidence="1">
        <name>[4Fe-4S] cluster</name>
        <dbReference type="ChEBI" id="CHEBI:49883"/>
    </cofactor>
    <text evidence="1">Binds 2 [4Fe-4S] clusters.</text>
</comment>
<comment type="cofactor">
    <cofactor evidence="1">
        <name>[3Fe-4S] cluster</name>
        <dbReference type="ChEBI" id="CHEBI:21137"/>
    </cofactor>
    <text evidence="1">Binds 1 [3Fe-4S] cluster.</text>
</comment>
<comment type="subunit">
    <text evidence="10 11 12">Composed of a large subunit (VhoA), a small subunit (VhoG) and a cytochrome subunit (VhoC).</text>
</comment>
<comment type="subcellular location">
    <subcellularLocation>
        <location evidence="9 10">Cell membrane</location>
        <topology evidence="9 10">Peripheral membrane protein</topology>
    </subcellularLocation>
    <text evidence="8">Likely localized in the pseudo-periplasm.</text>
</comment>
<comment type="induction">
    <text evidence="5">Expressed in methanol-grown cells.</text>
</comment>
<comment type="PTM">
    <text evidence="2">Predicted to be exported by the Tat system. The position of the signal peptide cleavage has not been experimentally proven.</text>
</comment>
<comment type="similarity">
    <text evidence="8">Belongs to the [NiFe]/[NiFeSe] hydrogenase small subunit family.</text>
</comment>
<comment type="sequence caution" evidence="8">
    <conflict type="erroneous initiation">
        <sequence resource="EMBL-CDS" id="CAA58113"/>
    </conflict>
    <text>Truncated N-terminus.</text>
</comment>
<protein>
    <recommendedName>
        <fullName evidence="8">F420 non-reducing hydrogenase I small subunit</fullName>
        <ecNumber evidence="9 10 12">1.12.98.3</ecNumber>
    </recommendedName>
    <alternativeName>
        <fullName evidence="8">F420-nonreactive hydrogenase I small subunit</fullName>
    </alternativeName>
    <alternativeName>
        <fullName evidence="8">Methanosarcina-phenazine hydrogenase I small subunit</fullName>
    </alternativeName>
</protein>
<feature type="signal peptide" description="Tat-type signal" evidence="2">
    <location>
        <begin position="1"/>
        <end position="51"/>
    </location>
</feature>
<feature type="chain" id="PRO_0000459033" description="F420 non-reducing hydrogenase I small subunit">
    <location>
        <begin position="52"/>
        <end position="386"/>
    </location>
</feature>
<feature type="binding site" evidence="1">
    <location>
        <position position="67"/>
    </location>
    <ligand>
        <name>[4Fe-4S] cluster</name>
        <dbReference type="ChEBI" id="CHEBI:49883"/>
        <label>1</label>
    </ligand>
</feature>
<feature type="binding site" evidence="1">
    <location>
        <position position="70"/>
    </location>
    <ligand>
        <name>[4Fe-4S] cluster</name>
        <dbReference type="ChEBI" id="CHEBI:49883"/>
        <label>1</label>
    </ligand>
</feature>
<feature type="binding site" evidence="1">
    <location>
        <position position="178"/>
    </location>
    <ligand>
        <name>[4Fe-4S] cluster</name>
        <dbReference type="ChEBI" id="CHEBI:49883"/>
        <label>1</label>
    </ligand>
</feature>
<feature type="binding site" evidence="1">
    <location>
        <position position="227"/>
    </location>
    <ligand>
        <name>[4Fe-4S] cluster</name>
        <dbReference type="ChEBI" id="CHEBI:49883"/>
        <label>1</label>
    </ligand>
</feature>
<feature type="binding site" evidence="1">
    <location>
        <position position="273"/>
    </location>
    <ligand>
        <name>[4Fe-4S] cluster</name>
        <dbReference type="ChEBI" id="CHEBI:49883"/>
        <label>2</label>
    </ligand>
</feature>
<feature type="binding site" evidence="1">
    <location>
        <position position="276"/>
    </location>
    <ligand>
        <name>[4Fe-4S] cluster</name>
        <dbReference type="ChEBI" id="CHEBI:49883"/>
        <label>2</label>
    </ligand>
</feature>
<feature type="binding site" evidence="1">
    <location>
        <position position="296"/>
    </location>
    <ligand>
        <name>[4Fe-4S] cluster</name>
        <dbReference type="ChEBI" id="CHEBI:49883"/>
        <label>2</label>
    </ligand>
</feature>
<feature type="binding site" evidence="1">
    <location>
        <position position="302"/>
    </location>
    <ligand>
        <name>[4Fe-4S] cluster</name>
        <dbReference type="ChEBI" id="CHEBI:49883"/>
        <label>2</label>
    </ligand>
</feature>
<feature type="binding site" evidence="1">
    <location>
        <position position="311"/>
    </location>
    <ligand>
        <name>[3Fe-4S] cluster</name>
        <dbReference type="ChEBI" id="CHEBI:21137"/>
    </ligand>
</feature>
<feature type="binding site" evidence="1">
    <location>
        <position position="330"/>
    </location>
    <ligand>
        <name>[3Fe-4S] cluster</name>
        <dbReference type="ChEBI" id="CHEBI:21137"/>
    </ligand>
</feature>
<feature type="binding site" evidence="1">
    <location>
        <position position="333"/>
    </location>
    <ligand>
        <name>[3Fe-4S] cluster</name>
        <dbReference type="ChEBI" id="CHEBI:21137"/>
    </ligand>
</feature>
<dbReference type="EC" id="1.12.98.3" evidence="9 10 12"/>
<dbReference type="EMBL" id="X82940">
    <property type="protein sequence ID" value="CAA58113.1"/>
    <property type="status" value="ALT_INIT"/>
    <property type="molecule type" value="Genomic_DNA"/>
</dbReference>
<dbReference type="EMBL" id="AE008384">
    <property type="protein sequence ID" value="AAM32010.1"/>
    <property type="molecule type" value="Genomic_DNA"/>
</dbReference>
<dbReference type="PIR" id="S49928">
    <property type="entry name" value="S49928"/>
</dbReference>
<dbReference type="SMR" id="Q50248"/>
<dbReference type="TCDB" id="3.D.7.1.1">
    <property type="family name" value="the h2:heterodisulfide oxidoreductase (hho) family"/>
</dbReference>
<dbReference type="KEGG" id="mma:MM_2314"/>
<dbReference type="PATRIC" id="fig|192952.21.peg.2650"/>
<dbReference type="eggNOG" id="arCOG02474">
    <property type="taxonomic scope" value="Archaea"/>
</dbReference>
<dbReference type="HOGENOM" id="CLU_046107_1_2_2"/>
<dbReference type="BioCyc" id="MetaCyc:MONOMER-12222"/>
<dbReference type="Proteomes" id="UP000000595">
    <property type="component" value="Chromosome"/>
</dbReference>
<dbReference type="GO" id="GO:0044569">
    <property type="term" value="C:[Ni-Fe] hydrogenase complex"/>
    <property type="evidence" value="ECO:0007669"/>
    <property type="project" value="TreeGrafter"/>
</dbReference>
<dbReference type="GO" id="GO:0009375">
    <property type="term" value="C:ferredoxin hydrogenase complex"/>
    <property type="evidence" value="ECO:0007669"/>
    <property type="project" value="InterPro"/>
</dbReference>
<dbReference type="GO" id="GO:0005886">
    <property type="term" value="C:plasma membrane"/>
    <property type="evidence" value="ECO:0007669"/>
    <property type="project" value="UniProtKB-SubCell"/>
</dbReference>
<dbReference type="GO" id="GO:0051538">
    <property type="term" value="F:3 iron, 4 sulfur cluster binding"/>
    <property type="evidence" value="ECO:0007669"/>
    <property type="project" value="UniProtKB-KW"/>
</dbReference>
<dbReference type="GO" id="GO:0051539">
    <property type="term" value="F:4 iron, 4 sulfur cluster binding"/>
    <property type="evidence" value="ECO:0007669"/>
    <property type="project" value="UniProtKB-KW"/>
</dbReference>
<dbReference type="GO" id="GO:0009055">
    <property type="term" value="F:electron transfer activity"/>
    <property type="evidence" value="ECO:0007669"/>
    <property type="project" value="TreeGrafter"/>
</dbReference>
<dbReference type="GO" id="GO:0008901">
    <property type="term" value="F:ferredoxin hydrogenase activity"/>
    <property type="evidence" value="ECO:0007669"/>
    <property type="project" value="InterPro"/>
</dbReference>
<dbReference type="GO" id="GO:0046872">
    <property type="term" value="F:metal ion binding"/>
    <property type="evidence" value="ECO:0007669"/>
    <property type="project" value="UniProtKB-KW"/>
</dbReference>
<dbReference type="GO" id="GO:0015948">
    <property type="term" value="P:methanogenesis"/>
    <property type="evidence" value="ECO:0007669"/>
    <property type="project" value="UniProtKB-KW"/>
</dbReference>
<dbReference type="Gene3D" id="4.10.480.10">
    <property type="entry name" value="Cytochrome-c3 hydrogenase, C-terminal domain"/>
    <property type="match status" value="1"/>
</dbReference>
<dbReference type="Gene3D" id="3.40.50.700">
    <property type="entry name" value="NADH:ubiquinone oxidoreductase-like, 20kDa subunit"/>
    <property type="match status" value="1"/>
</dbReference>
<dbReference type="InterPro" id="IPR027394">
    <property type="entry name" value="Cytochrome-c3_hydrogenase_C"/>
</dbReference>
<dbReference type="InterPro" id="IPR006137">
    <property type="entry name" value="NADH_UbQ_OxRdtase-like_20kDa"/>
</dbReference>
<dbReference type="InterPro" id="IPR037148">
    <property type="entry name" value="NiFe-Hase_small_C_sf"/>
</dbReference>
<dbReference type="InterPro" id="IPR037024">
    <property type="entry name" value="NiFe_Hase_small_N_sf"/>
</dbReference>
<dbReference type="InterPro" id="IPR001821">
    <property type="entry name" value="NiFe_hydrogenase_ssu"/>
</dbReference>
<dbReference type="InterPro" id="IPR006311">
    <property type="entry name" value="TAT_signal"/>
</dbReference>
<dbReference type="InterPro" id="IPR019546">
    <property type="entry name" value="TAT_signal_bac_arc"/>
</dbReference>
<dbReference type="NCBIfam" id="TIGR00391">
    <property type="entry name" value="hydA"/>
    <property type="match status" value="1"/>
</dbReference>
<dbReference type="NCBIfam" id="TIGR01409">
    <property type="entry name" value="TAT_signal_seq"/>
    <property type="match status" value="1"/>
</dbReference>
<dbReference type="PANTHER" id="PTHR30013:SF7">
    <property type="entry name" value="HYDROGENASE-2 SMALL CHAIN"/>
    <property type="match status" value="1"/>
</dbReference>
<dbReference type="PANTHER" id="PTHR30013">
    <property type="entry name" value="NIFE / NIFESE HYDROGENASE SMALL SUBUNIT FAMILY MEMBER"/>
    <property type="match status" value="1"/>
</dbReference>
<dbReference type="Pfam" id="PF14720">
    <property type="entry name" value="NiFe_hyd_SSU_C"/>
    <property type="match status" value="1"/>
</dbReference>
<dbReference type="Pfam" id="PF01058">
    <property type="entry name" value="Oxidored_q6"/>
    <property type="match status" value="1"/>
</dbReference>
<dbReference type="PIRSF" id="PIRSF000310">
    <property type="entry name" value="NiFe_hyd_ssu"/>
    <property type="match status" value="1"/>
</dbReference>
<dbReference type="SUPFAM" id="SSF56770">
    <property type="entry name" value="HydA/Nqo6-like"/>
    <property type="match status" value="1"/>
</dbReference>
<dbReference type="PROSITE" id="PS51318">
    <property type="entry name" value="TAT"/>
    <property type="match status" value="1"/>
</dbReference>
<name>VHOG_METMA</name>
<accession>Q50248</accession>
<accession>Q8PUM0</accession>
<evidence type="ECO:0000250" key="1">
    <source>
        <dbReference type="UniProtKB" id="P21853"/>
    </source>
</evidence>
<evidence type="ECO:0000255" key="2">
    <source>
        <dbReference type="PROSITE-ProRule" id="PRU00648"/>
    </source>
</evidence>
<evidence type="ECO:0000269" key="3">
    <source>
    </source>
</evidence>
<evidence type="ECO:0000269" key="4">
    <source>
    </source>
</evidence>
<evidence type="ECO:0000269" key="5">
    <source>
    </source>
</evidence>
<evidence type="ECO:0000269" key="6">
    <source>
    </source>
</evidence>
<evidence type="ECO:0000303" key="7">
    <source>
    </source>
</evidence>
<evidence type="ECO:0000305" key="8"/>
<evidence type="ECO:0000305" key="9">
    <source>
    </source>
</evidence>
<evidence type="ECO:0000305" key="10">
    <source>
    </source>
</evidence>
<evidence type="ECO:0000305" key="11">
    <source>
    </source>
</evidence>
<evidence type="ECO:0000305" key="12">
    <source>
    </source>
</evidence>
<evidence type="ECO:0000312" key="13">
    <source>
        <dbReference type="EMBL" id="AAM32010.1"/>
    </source>
</evidence>
<sequence>MVEMSTGTTNLVRTLDSMDFLKMDRRTFMKAVSALGATAFLGTYQTEIVNALEFAETKVIWIHGSECTGCSESVLNGGNPDIVQALTKLNVNLAYHETLCMQQGIWNDGELVNTSELNSEILLEDLYKEGNYILVVEGSIPNGPDGSGRYLVIGNKTFKETLGEAAKNANAIVAVGACACWGGITSADSDIEKDTDYRGVAFKKTDASKGMLKELGIDKPVINIPGCPCHPDWVLLTLGAVILGKIKIPDDLPAALDQYGRPKVFFPPDHTVHENCPRRGYYDRGEFDTEVGGEKCLWKLGCKAPYAHADCGIRRWNGSVSMCTQAGGPCINCVDPGFPDASRPLYVEAEDKGIVGANIDTIAKVAVGAAAVAAGVHAVRRMGKGE</sequence>
<proteinExistence type="evidence at transcript level"/>